<evidence type="ECO:0000250" key="1"/>
<evidence type="ECO:0000305" key="2"/>
<accession>O86404</accession>
<accession>O86405</accession>
<organism>
    <name type="scientific">Neisseria perflava</name>
    <dbReference type="NCBI Taxonomy" id="33053"/>
    <lineage>
        <taxon>Bacteria</taxon>
        <taxon>Pseudomonadati</taxon>
        <taxon>Pseudomonadota</taxon>
        <taxon>Betaproteobacteria</taxon>
        <taxon>Neisseriales</taxon>
        <taxon>Neisseriaceae</taxon>
        <taxon>Neisseria</taxon>
    </lineage>
</organism>
<reference key="1">
    <citation type="journal article" date="1999" name="Mol. Biol. Evol.">
        <title>Networks and groups within the genus Neisseria: analysis of argF, recA, rho, and 16S rRNA sequences from human Neisseria species.</title>
        <authorList>
            <person name="Smith N.H."/>
            <person name="Holmes E.C."/>
            <person name="Donovan G.M."/>
            <person name="Carpenter G.A."/>
            <person name="Spratt B.G."/>
        </authorList>
    </citation>
    <scope>NUCLEOTIDE SEQUENCE [GENOMIC DNA]</scope>
    <source>
        <strain>ATCC 10555 / DSM 18009 / CIP 73.11 / CCUG 17915 / LMG 5284 / NRL 30015 / NRRL B-1790</strain>
        <strain>LCDC 85402</strain>
    </source>
</reference>
<name>OTC_NEIPE</name>
<comment type="function">
    <text evidence="1">Reversibly catalyzes the transfer of the carbamoyl group from carbamoyl phosphate (CP) to the N(epsilon) atom of ornithine (ORN) to produce L-citrulline.</text>
</comment>
<comment type="catalytic activity">
    <reaction>
        <text>carbamoyl phosphate + L-ornithine = L-citrulline + phosphate + H(+)</text>
        <dbReference type="Rhea" id="RHEA:19513"/>
        <dbReference type="ChEBI" id="CHEBI:15378"/>
        <dbReference type="ChEBI" id="CHEBI:43474"/>
        <dbReference type="ChEBI" id="CHEBI:46911"/>
        <dbReference type="ChEBI" id="CHEBI:57743"/>
        <dbReference type="ChEBI" id="CHEBI:58228"/>
        <dbReference type="EC" id="2.1.3.3"/>
    </reaction>
</comment>
<comment type="pathway">
    <text>Amino-acid biosynthesis; L-arginine biosynthesis; L-arginine from L-ornithine and carbamoyl phosphate: step 1/3.</text>
</comment>
<comment type="subcellular location">
    <subcellularLocation>
        <location evidence="1">Cytoplasm</location>
    </subcellularLocation>
</comment>
<comment type="similarity">
    <text evidence="2">Belongs to the aspartate/ornithine carbamoyltransferase superfamily. OTCase family.</text>
</comment>
<sequence length="232" mass="25480">DQGAGATYLEPSASQIGHKESIKDTARVLGRMYDAIEYRGFGQEIIEELAKYAGVPVFNGLTNEFHPTQMLADALTMREHSSKPLNQTAFAYVGDARYNMGNSLLILGAKLGMDVRIGAPESLWPSEGIIAAAHAVAKETGAKITLTENAHEAVNGVGFIHTDVWVSMGEPKEVWQERIDLLKDYRVTPELMAASGNPQVKFMHCLPAFHNRETKVGEWIYETFGLNGVEVT</sequence>
<keyword id="KW-0028">Amino-acid biosynthesis</keyword>
<keyword id="KW-0055">Arginine biosynthesis</keyword>
<keyword id="KW-0963">Cytoplasm</keyword>
<keyword id="KW-0808">Transferase</keyword>
<gene>
    <name type="primary">argF</name>
</gene>
<protein>
    <recommendedName>
        <fullName>Ornithine carbamoyltransferase</fullName>
        <shortName>OTCase</shortName>
        <ecNumber>2.1.3.3</ecNumber>
    </recommendedName>
</protein>
<proteinExistence type="inferred from homology"/>
<feature type="chain" id="PRO_0000112968" description="Ornithine carbamoyltransferase">
    <location>
        <begin position="1" status="less than"/>
        <end position="232" status="greater than"/>
    </location>
</feature>
<feature type="binding site" evidence="1">
    <location>
        <position position="15"/>
    </location>
    <ligand>
        <name>carbamoyl phosphate</name>
        <dbReference type="ChEBI" id="CHEBI:58228"/>
    </ligand>
</feature>
<feature type="binding site" evidence="1">
    <location>
        <position position="39"/>
    </location>
    <ligand>
        <name>carbamoyl phosphate</name>
        <dbReference type="ChEBI" id="CHEBI:58228"/>
    </ligand>
</feature>
<feature type="binding site" evidence="1">
    <location>
        <begin position="66"/>
        <end position="69"/>
    </location>
    <ligand>
        <name>carbamoyl phosphate</name>
        <dbReference type="ChEBI" id="CHEBI:58228"/>
    </ligand>
</feature>
<feature type="binding site" evidence="1">
    <location>
        <position position="99"/>
    </location>
    <ligand>
        <name>L-ornithine</name>
        <dbReference type="ChEBI" id="CHEBI:46911"/>
    </ligand>
</feature>
<feature type="binding site" evidence="1">
    <location>
        <position position="163"/>
    </location>
    <ligand>
        <name>L-ornithine</name>
        <dbReference type="ChEBI" id="CHEBI:46911"/>
    </ligand>
</feature>
<feature type="binding site" evidence="1">
    <location>
        <begin position="167"/>
        <end position="168"/>
    </location>
    <ligand>
        <name>L-ornithine</name>
        <dbReference type="ChEBI" id="CHEBI:46911"/>
    </ligand>
</feature>
<feature type="binding site" evidence="1">
    <location>
        <begin position="204"/>
        <end position="207"/>
    </location>
    <ligand>
        <name>carbamoyl phosphate</name>
        <dbReference type="ChEBI" id="CHEBI:58228"/>
    </ligand>
</feature>
<feature type="binding site" evidence="1">
    <location>
        <position position="232"/>
    </location>
    <ligand>
        <name>carbamoyl phosphate</name>
        <dbReference type="ChEBI" id="CHEBI:58228"/>
    </ligand>
</feature>
<feature type="site" description="Important for structural integrity" evidence="1">
    <location>
        <position position="79"/>
    </location>
</feature>
<feature type="sequence variant" description="In strain: CCUG 17915L.">
    <original>A</original>
    <variation>V</variation>
    <location>
        <position position="6"/>
    </location>
</feature>
<feature type="sequence variant" description="In strain: CCUG 17915L.">
    <original>YDA</original>
    <variation>FDG</variation>
    <location>
        <begin position="33"/>
        <end position="35"/>
    </location>
</feature>
<feature type="sequence variant" description="In strain: CCUG 17915L.">
    <original>EII</original>
    <variation>DVV</variation>
    <location>
        <begin position="44"/>
        <end position="46"/>
    </location>
</feature>
<feature type="sequence variant" description="In strain: CCUG 17915L.">
    <original>S</original>
    <variation>N</variation>
    <location>
        <position position="82"/>
    </location>
</feature>
<feature type="sequence variant" description="In strain: CCUG 17915L.">
    <original>T</original>
    <variation>I</variation>
    <location>
        <position position="88"/>
    </location>
</feature>
<feature type="sequence variant" description="In strain: CCUG 17915L.">
    <original>G</original>
    <variation>A</variation>
    <location>
        <position position="101"/>
    </location>
</feature>
<feature type="sequence variant" description="In strain: CCUG 17915L.">
    <original>ILG</original>
    <variation>VLA</variation>
    <location>
        <begin position="106"/>
        <end position="108"/>
    </location>
</feature>
<feature type="sequence variant" description="In strain: CCUG 17915L.">
    <original>E</original>
    <variation>K</variation>
    <location>
        <position position="121"/>
    </location>
</feature>
<feature type="sequence variant" description="In strain: CCUG 17915L.">
    <original>GIIAAAH</original>
    <variation>NIIETVQ</variation>
    <location>
        <begin position="128"/>
        <end position="134"/>
    </location>
</feature>
<feature type="sequence variant" description="In strain: CCUG 17915L.">
    <original>AKIT</original>
    <variation>GRIL</variation>
    <location>
        <begin position="142"/>
        <end position="145"/>
    </location>
</feature>
<feature type="sequence variant" description="In strain: CCUG 17915L.">
    <original>AH</original>
    <variation>VK</variation>
    <location>
        <begin position="150"/>
        <end position="151"/>
    </location>
</feature>
<feature type="sequence variant" description="In strain: CCUG 17915L.">
    <original>N</original>
    <variation>K</variation>
    <location>
        <position position="155"/>
    </location>
</feature>
<feature type="sequence variant" description="In strain: CCUG 17915L.">
    <original>G</original>
    <variation>D</variation>
    <location>
        <position position="158"/>
    </location>
</feature>
<feature type="sequence variant" description="In strain: CCUG 17915L.">
    <original>V</original>
    <variation>A</variation>
    <location>
        <position position="174"/>
    </location>
</feature>
<feature type="sequence variant" description="In strain: CCUG 17915L.">
    <original>SG</original>
    <variation>AE</variation>
    <location>
        <begin position="195"/>
        <end position="196"/>
    </location>
</feature>
<feature type="non-terminal residue">
    <location>
        <position position="1"/>
    </location>
</feature>
<feature type="non-terminal residue">
    <location>
        <position position="232"/>
    </location>
</feature>
<dbReference type="EC" id="2.1.3.3"/>
<dbReference type="EMBL" id="AJ223883">
    <property type="protein sequence ID" value="CAA11614.1"/>
    <property type="molecule type" value="Genomic_DNA"/>
</dbReference>
<dbReference type="EMBL" id="AJ223897">
    <property type="protein sequence ID" value="CAA11628.1"/>
    <property type="molecule type" value="Genomic_DNA"/>
</dbReference>
<dbReference type="SMR" id="O86404"/>
<dbReference type="UniPathway" id="UPA00068">
    <property type="reaction ID" value="UER00112"/>
</dbReference>
<dbReference type="GO" id="GO:0005737">
    <property type="term" value="C:cytoplasm"/>
    <property type="evidence" value="ECO:0007669"/>
    <property type="project" value="UniProtKB-SubCell"/>
</dbReference>
<dbReference type="GO" id="GO:0016597">
    <property type="term" value="F:amino acid binding"/>
    <property type="evidence" value="ECO:0007669"/>
    <property type="project" value="InterPro"/>
</dbReference>
<dbReference type="GO" id="GO:0004585">
    <property type="term" value="F:ornithine carbamoyltransferase activity"/>
    <property type="evidence" value="ECO:0007669"/>
    <property type="project" value="UniProtKB-EC"/>
</dbReference>
<dbReference type="GO" id="GO:0042450">
    <property type="term" value="P:arginine biosynthetic process via ornithine"/>
    <property type="evidence" value="ECO:0007669"/>
    <property type="project" value="TreeGrafter"/>
</dbReference>
<dbReference type="GO" id="GO:0019240">
    <property type="term" value="P:citrulline biosynthetic process"/>
    <property type="evidence" value="ECO:0007669"/>
    <property type="project" value="TreeGrafter"/>
</dbReference>
<dbReference type="GO" id="GO:0006526">
    <property type="term" value="P:L-arginine biosynthetic process"/>
    <property type="evidence" value="ECO:0007669"/>
    <property type="project" value="UniProtKB-UniPathway"/>
</dbReference>
<dbReference type="Gene3D" id="3.40.50.1370">
    <property type="entry name" value="Aspartate/ornithine carbamoyltransferase"/>
    <property type="match status" value="2"/>
</dbReference>
<dbReference type="InterPro" id="IPR006132">
    <property type="entry name" value="Asp/Orn_carbamoyltranf_P-bd"/>
</dbReference>
<dbReference type="InterPro" id="IPR006130">
    <property type="entry name" value="Asp/Orn_carbamoylTrfase"/>
</dbReference>
<dbReference type="InterPro" id="IPR036901">
    <property type="entry name" value="Asp/Orn_carbamoylTrfase_sf"/>
</dbReference>
<dbReference type="InterPro" id="IPR006131">
    <property type="entry name" value="Asp_carbamoyltransf_Asp/Orn-bd"/>
</dbReference>
<dbReference type="InterPro" id="IPR002292">
    <property type="entry name" value="Orn/put_carbamltrans"/>
</dbReference>
<dbReference type="PANTHER" id="PTHR45753:SF2">
    <property type="entry name" value="ORNITHINE CARBAMOYLTRANSFERASE"/>
    <property type="match status" value="1"/>
</dbReference>
<dbReference type="PANTHER" id="PTHR45753">
    <property type="entry name" value="ORNITHINE CARBAMOYLTRANSFERASE, MITOCHONDRIAL"/>
    <property type="match status" value="1"/>
</dbReference>
<dbReference type="Pfam" id="PF00185">
    <property type="entry name" value="OTCace"/>
    <property type="match status" value="1"/>
</dbReference>
<dbReference type="Pfam" id="PF02729">
    <property type="entry name" value="OTCace_N"/>
    <property type="match status" value="1"/>
</dbReference>
<dbReference type="PRINTS" id="PR00100">
    <property type="entry name" value="AOTCASE"/>
</dbReference>
<dbReference type="PRINTS" id="PR00102">
    <property type="entry name" value="OTCASE"/>
</dbReference>
<dbReference type="SUPFAM" id="SSF53671">
    <property type="entry name" value="Aspartate/ornithine carbamoyltransferase"/>
    <property type="match status" value="1"/>
</dbReference>